<reference key="1">
    <citation type="submission" date="2007-10" db="EMBL/GenBank/DDBJ databases">
        <title>Complete sequence of Shewanella pealeana ATCC 700345.</title>
        <authorList>
            <consortium name="US DOE Joint Genome Institute"/>
            <person name="Copeland A."/>
            <person name="Lucas S."/>
            <person name="Lapidus A."/>
            <person name="Barry K."/>
            <person name="Glavina del Rio T."/>
            <person name="Dalin E."/>
            <person name="Tice H."/>
            <person name="Pitluck S."/>
            <person name="Chertkov O."/>
            <person name="Brettin T."/>
            <person name="Bruce D."/>
            <person name="Detter J.C."/>
            <person name="Han C."/>
            <person name="Schmutz J."/>
            <person name="Larimer F."/>
            <person name="Land M."/>
            <person name="Hauser L."/>
            <person name="Kyrpides N."/>
            <person name="Kim E."/>
            <person name="Zhao J.-S.Z."/>
            <person name="Manno D."/>
            <person name="Hawari J."/>
            <person name="Richardson P."/>
        </authorList>
    </citation>
    <scope>NUCLEOTIDE SEQUENCE [LARGE SCALE GENOMIC DNA]</scope>
    <source>
        <strain>ATCC 700345 / ANG-SQ1</strain>
    </source>
</reference>
<feature type="chain" id="PRO_0000349793" description="tRNA-specific 2-thiouridylase MnmA">
    <location>
        <begin position="1"/>
        <end position="371"/>
    </location>
</feature>
<feature type="region of interest" description="Interaction with target base in tRNA" evidence="1">
    <location>
        <begin position="102"/>
        <end position="104"/>
    </location>
</feature>
<feature type="region of interest" description="Interaction with tRNA" evidence="1">
    <location>
        <begin position="154"/>
        <end position="156"/>
    </location>
</feature>
<feature type="region of interest" description="Interaction with tRNA" evidence="1">
    <location>
        <begin position="316"/>
        <end position="317"/>
    </location>
</feature>
<feature type="active site" description="Nucleophile" evidence="1">
    <location>
        <position position="107"/>
    </location>
</feature>
<feature type="active site" description="Cysteine persulfide intermediate" evidence="1">
    <location>
        <position position="204"/>
    </location>
</feature>
<feature type="binding site" evidence="1">
    <location>
        <begin position="16"/>
        <end position="23"/>
    </location>
    <ligand>
        <name>ATP</name>
        <dbReference type="ChEBI" id="CHEBI:30616"/>
    </ligand>
</feature>
<feature type="binding site" evidence="1">
    <location>
        <position position="42"/>
    </location>
    <ligand>
        <name>ATP</name>
        <dbReference type="ChEBI" id="CHEBI:30616"/>
    </ligand>
</feature>
<feature type="binding site" evidence="1">
    <location>
        <position position="132"/>
    </location>
    <ligand>
        <name>ATP</name>
        <dbReference type="ChEBI" id="CHEBI:30616"/>
    </ligand>
</feature>
<feature type="site" description="Interaction with tRNA" evidence="1">
    <location>
        <position position="133"/>
    </location>
</feature>
<feature type="site" description="Interaction with tRNA" evidence="1">
    <location>
        <position position="349"/>
    </location>
</feature>
<feature type="disulfide bond" description="Alternate" evidence="1">
    <location>
        <begin position="107"/>
        <end position="204"/>
    </location>
</feature>
<comment type="function">
    <text evidence="1">Catalyzes the 2-thiolation of uridine at the wobble position (U34) of tRNA, leading to the formation of s(2)U34.</text>
</comment>
<comment type="catalytic activity">
    <reaction evidence="1">
        <text>S-sulfanyl-L-cysteinyl-[protein] + uridine(34) in tRNA + AH2 + ATP = 2-thiouridine(34) in tRNA + L-cysteinyl-[protein] + A + AMP + diphosphate + H(+)</text>
        <dbReference type="Rhea" id="RHEA:47032"/>
        <dbReference type="Rhea" id="RHEA-COMP:10131"/>
        <dbReference type="Rhea" id="RHEA-COMP:11726"/>
        <dbReference type="Rhea" id="RHEA-COMP:11727"/>
        <dbReference type="Rhea" id="RHEA-COMP:11728"/>
        <dbReference type="ChEBI" id="CHEBI:13193"/>
        <dbReference type="ChEBI" id="CHEBI:15378"/>
        <dbReference type="ChEBI" id="CHEBI:17499"/>
        <dbReference type="ChEBI" id="CHEBI:29950"/>
        <dbReference type="ChEBI" id="CHEBI:30616"/>
        <dbReference type="ChEBI" id="CHEBI:33019"/>
        <dbReference type="ChEBI" id="CHEBI:61963"/>
        <dbReference type="ChEBI" id="CHEBI:65315"/>
        <dbReference type="ChEBI" id="CHEBI:87170"/>
        <dbReference type="ChEBI" id="CHEBI:456215"/>
        <dbReference type="EC" id="2.8.1.13"/>
    </reaction>
</comment>
<comment type="subcellular location">
    <subcellularLocation>
        <location evidence="1">Cytoplasm</location>
    </subcellularLocation>
</comment>
<comment type="similarity">
    <text evidence="1">Belongs to the MnmA/TRMU family.</text>
</comment>
<comment type="sequence caution" evidence="2">
    <conflict type="erroneous initiation">
        <sequence resource="EMBL-CDS" id="ABV87858"/>
    </conflict>
</comment>
<gene>
    <name evidence="1" type="primary">mnmA</name>
    <name type="ordered locus">Spea_2538</name>
</gene>
<organism>
    <name type="scientific">Shewanella pealeana (strain ATCC 700345 / ANG-SQ1)</name>
    <dbReference type="NCBI Taxonomy" id="398579"/>
    <lineage>
        <taxon>Bacteria</taxon>
        <taxon>Pseudomonadati</taxon>
        <taxon>Pseudomonadota</taxon>
        <taxon>Gammaproteobacteria</taxon>
        <taxon>Alteromonadales</taxon>
        <taxon>Shewanellaceae</taxon>
        <taxon>Shewanella</taxon>
    </lineage>
</organism>
<proteinExistence type="inferred from homology"/>
<evidence type="ECO:0000255" key="1">
    <source>
        <dbReference type="HAMAP-Rule" id="MF_00144"/>
    </source>
</evidence>
<evidence type="ECO:0000305" key="2"/>
<accession>A8H5M1</accession>
<dbReference type="EC" id="2.8.1.13" evidence="1"/>
<dbReference type="EMBL" id="CP000851">
    <property type="protein sequence ID" value="ABV87858.1"/>
    <property type="status" value="ALT_INIT"/>
    <property type="molecule type" value="Genomic_DNA"/>
</dbReference>
<dbReference type="RefSeq" id="WP_041410967.1">
    <property type="nucleotide sequence ID" value="NC_009901.1"/>
</dbReference>
<dbReference type="SMR" id="A8H5M1"/>
<dbReference type="STRING" id="398579.Spea_2538"/>
<dbReference type="KEGG" id="spl:Spea_2538"/>
<dbReference type="eggNOG" id="COG0482">
    <property type="taxonomic scope" value="Bacteria"/>
</dbReference>
<dbReference type="HOGENOM" id="CLU_035188_1_0_6"/>
<dbReference type="OrthoDB" id="9800696at2"/>
<dbReference type="Proteomes" id="UP000002608">
    <property type="component" value="Chromosome"/>
</dbReference>
<dbReference type="GO" id="GO:0005737">
    <property type="term" value="C:cytoplasm"/>
    <property type="evidence" value="ECO:0007669"/>
    <property type="project" value="UniProtKB-SubCell"/>
</dbReference>
<dbReference type="GO" id="GO:0005524">
    <property type="term" value="F:ATP binding"/>
    <property type="evidence" value="ECO:0007669"/>
    <property type="project" value="UniProtKB-KW"/>
</dbReference>
<dbReference type="GO" id="GO:0000049">
    <property type="term" value="F:tRNA binding"/>
    <property type="evidence" value="ECO:0007669"/>
    <property type="project" value="UniProtKB-KW"/>
</dbReference>
<dbReference type="GO" id="GO:0103016">
    <property type="term" value="F:tRNA-uridine 2-sulfurtransferase activity"/>
    <property type="evidence" value="ECO:0007669"/>
    <property type="project" value="UniProtKB-EC"/>
</dbReference>
<dbReference type="GO" id="GO:0002143">
    <property type="term" value="P:tRNA wobble position uridine thiolation"/>
    <property type="evidence" value="ECO:0007669"/>
    <property type="project" value="TreeGrafter"/>
</dbReference>
<dbReference type="CDD" id="cd01998">
    <property type="entry name" value="MnmA_TRMU-like"/>
    <property type="match status" value="1"/>
</dbReference>
<dbReference type="FunFam" id="2.30.30.280:FF:000001">
    <property type="entry name" value="tRNA-specific 2-thiouridylase MnmA"/>
    <property type="match status" value="1"/>
</dbReference>
<dbReference type="FunFam" id="2.40.30.10:FF:000023">
    <property type="entry name" value="tRNA-specific 2-thiouridylase MnmA"/>
    <property type="match status" value="1"/>
</dbReference>
<dbReference type="FunFam" id="3.40.50.620:FF:000004">
    <property type="entry name" value="tRNA-specific 2-thiouridylase MnmA"/>
    <property type="match status" value="1"/>
</dbReference>
<dbReference type="Gene3D" id="2.30.30.280">
    <property type="entry name" value="Adenine nucleotide alpha hydrolases-like domains"/>
    <property type="match status" value="1"/>
</dbReference>
<dbReference type="Gene3D" id="3.40.50.620">
    <property type="entry name" value="HUPs"/>
    <property type="match status" value="1"/>
</dbReference>
<dbReference type="Gene3D" id="2.40.30.10">
    <property type="entry name" value="Translation factors"/>
    <property type="match status" value="1"/>
</dbReference>
<dbReference type="HAMAP" id="MF_00144">
    <property type="entry name" value="tRNA_thiouridyl_MnmA"/>
    <property type="match status" value="1"/>
</dbReference>
<dbReference type="InterPro" id="IPR004506">
    <property type="entry name" value="MnmA-like"/>
</dbReference>
<dbReference type="InterPro" id="IPR046885">
    <property type="entry name" value="MnmA-like_C"/>
</dbReference>
<dbReference type="InterPro" id="IPR046884">
    <property type="entry name" value="MnmA-like_central"/>
</dbReference>
<dbReference type="InterPro" id="IPR023382">
    <property type="entry name" value="MnmA-like_central_sf"/>
</dbReference>
<dbReference type="InterPro" id="IPR014729">
    <property type="entry name" value="Rossmann-like_a/b/a_fold"/>
</dbReference>
<dbReference type="NCBIfam" id="NF001138">
    <property type="entry name" value="PRK00143.1"/>
    <property type="match status" value="1"/>
</dbReference>
<dbReference type="NCBIfam" id="TIGR00420">
    <property type="entry name" value="trmU"/>
    <property type="match status" value="1"/>
</dbReference>
<dbReference type="PANTHER" id="PTHR11933:SF5">
    <property type="entry name" value="MITOCHONDRIAL TRNA-SPECIFIC 2-THIOURIDYLASE 1"/>
    <property type="match status" value="1"/>
</dbReference>
<dbReference type="PANTHER" id="PTHR11933">
    <property type="entry name" value="TRNA 5-METHYLAMINOMETHYL-2-THIOURIDYLATE -METHYLTRANSFERASE"/>
    <property type="match status" value="1"/>
</dbReference>
<dbReference type="Pfam" id="PF03054">
    <property type="entry name" value="tRNA_Me_trans"/>
    <property type="match status" value="1"/>
</dbReference>
<dbReference type="Pfam" id="PF20258">
    <property type="entry name" value="tRNA_Me_trans_C"/>
    <property type="match status" value="1"/>
</dbReference>
<dbReference type="Pfam" id="PF20259">
    <property type="entry name" value="tRNA_Me_trans_M"/>
    <property type="match status" value="1"/>
</dbReference>
<dbReference type="SUPFAM" id="SSF52402">
    <property type="entry name" value="Adenine nucleotide alpha hydrolases-like"/>
    <property type="match status" value="1"/>
</dbReference>
<name>MNMA_SHEPA</name>
<keyword id="KW-0067">ATP-binding</keyword>
<keyword id="KW-0963">Cytoplasm</keyword>
<keyword id="KW-1015">Disulfide bond</keyword>
<keyword id="KW-0547">Nucleotide-binding</keyword>
<keyword id="KW-1185">Reference proteome</keyword>
<keyword id="KW-0694">RNA-binding</keyword>
<keyword id="KW-0808">Transferase</keyword>
<keyword id="KW-0819">tRNA processing</keyword>
<keyword id="KW-0820">tRNA-binding</keyword>
<protein>
    <recommendedName>
        <fullName evidence="1">tRNA-specific 2-thiouridylase MnmA</fullName>
        <ecNumber evidence="1">2.8.1.13</ecNumber>
    </recommendedName>
</protein>
<sequence>MTSIEPTHLGKKVIVGMSGGVDSSVSAYLLMKQGYQVEGLFMKNWEEDDTDEYCAAADDLKDAQAVCDKLGIKLHTVNFASEYWDNVFEYFLAEYKAGRTPNPDIMCNKEIKFKAFLEFADEILDADYIAMGHYVRRRDIDGTSQMLRGVDGNKDQSYFLYTLGYEQVARSLFPVGELDKSEVREIAKEMGLITHDKKDSTGICFIGERKFTDFLQTFLPAQPGNIETSEGEVIGTHQGLMYHTLGQRKGLGIGGLKNSNDDPWYVVEKDLVRNVLIVGQGGNHPRLMSNGLVANQLHWVDRKGPANGSKITVKTRYRQQDVPCSVTYDSDDVLRVIFDEPVAAVTPGQSAVFYDGEICLGGGIIDALIRD</sequence>